<keyword id="KW-0963">Cytoplasm</keyword>
<keyword id="KW-0251">Elongation factor</keyword>
<keyword id="KW-0648">Protein biosynthesis</keyword>
<dbReference type="EMBL" id="CP000262">
    <property type="protein sequence ID" value="ABF38823.1"/>
    <property type="status" value="ALT_INIT"/>
    <property type="molecule type" value="Genomic_DNA"/>
</dbReference>
<dbReference type="SMR" id="Q1J4B3"/>
<dbReference type="KEGG" id="spi:MGAS10750_Spy1873"/>
<dbReference type="HOGENOM" id="CLU_047155_0_1_9"/>
<dbReference type="Proteomes" id="UP000002434">
    <property type="component" value="Chromosome"/>
</dbReference>
<dbReference type="GO" id="GO:0005737">
    <property type="term" value="C:cytoplasm"/>
    <property type="evidence" value="ECO:0007669"/>
    <property type="project" value="UniProtKB-SubCell"/>
</dbReference>
<dbReference type="GO" id="GO:0003746">
    <property type="term" value="F:translation elongation factor activity"/>
    <property type="evidence" value="ECO:0007669"/>
    <property type="project" value="UniProtKB-UniRule"/>
</dbReference>
<dbReference type="CDD" id="cd14275">
    <property type="entry name" value="UBA_EF-Ts"/>
    <property type="match status" value="1"/>
</dbReference>
<dbReference type="FunFam" id="1.10.286.20:FF:000004">
    <property type="entry name" value="Elongation factor Ts"/>
    <property type="match status" value="1"/>
</dbReference>
<dbReference type="FunFam" id="1.10.8.10:FF:000001">
    <property type="entry name" value="Elongation factor Ts"/>
    <property type="match status" value="1"/>
</dbReference>
<dbReference type="FunFam" id="3.30.479.20:FF:000013">
    <property type="entry name" value="Elongation factor Ts"/>
    <property type="match status" value="1"/>
</dbReference>
<dbReference type="Gene3D" id="1.10.286.20">
    <property type="match status" value="1"/>
</dbReference>
<dbReference type="Gene3D" id="1.10.8.10">
    <property type="entry name" value="DNA helicase RuvA subunit, C-terminal domain"/>
    <property type="match status" value="1"/>
</dbReference>
<dbReference type="Gene3D" id="3.30.479.20">
    <property type="entry name" value="Elongation factor Ts, dimerisation domain"/>
    <property type="match status" value="2"/>
</dbReference>
<dbReference type="HAMAP" id="MF_00050">
    <property type="entry name" value="EF_Ts"/>
    <property type="match status" value="1"/>
</dbReference>
<dbReference type="InterPro" id="IPR036402">
    <property type="entry name" value="EF-Ts_dimer_sf"/>
</dbReference>
<dbReference type="InterPro" id="IPR001816">
    <property type="entry name" value="Transl_elong_EFTs/EF1B"/>
</dbReference>
<dbReference type="InterPro" id="IPR014039">
    <property type="entry name" value="Transl_elong_EFTs/EF1B_dimer"/>
</dbReference>
<dbReference type="InterPro" id="IPR018101">
    <property type="entry name" value="Transl_elong_Ts_CS"/>
</dbReference>
<dbReference type="InterPro" id="IPR009060">
    <property type="entry name" value="UBA-like_sf"/>
</dbReference>
<dbReference type="NCBIfam" id="TIGR00116">
    <property type="entry name" value="tsf"/>
    <property type="match status" value="1"/>
</dbReference>
<dbReference type="PANTHER" id="PTHR11741">
    <property type="entry name" value="ELONGATION FACTOR TS"/>
    <property type="match status" value="1"/>
</dbReference>
<dbReference type="PANTHER" id="PTHR11741:SF0">
    <property type="entry name" value="ELONGATION FACTOR TS, MITOCHONDRIAL"/>
    <property type="match status" value="1"/>
</dbReference>
<dbReference type="Pfam" id="PF00889">
    <property type="entry name" value="EF_TS"/>
    <property type="match status" value="1"/>
</dbReference>
<dbReference type="SUPFAM" id="SSF54713">
    <property type="entry name" value="Elongation factor Ts (EF-Ts), dimerisation domain"/>
    <property type="match status" value="1"/>
</dbReference>
<dbReference type="SUPFAM" id="SSF46934">
    <property type="entry name" value="UBA-like"/>
    <property type="match status" value="1"/>
</dbReference>
<dbReference type="PROSITE" id="PS01126">
    <property type="entry name" value="EF_TS_1"/>
    <property type="match status" value="1"/>
</dbReference>
<dbReference type="PROSITE" id="PS01127">
    <property type="entry name" value="EF_TS_2"/>
    <property type="match status" value="1"/>
</dbReference>
<evidence type="ECO:0000255" key="1">
    <source>
        <dbReference type="HAMAP-Rule" id="MF_00050"/>
    </source>
</evidence>
<evidence type="ECO:0000305" key="2"/>
<gene>
    <name evidence="1" type="primary">tsf</name>
    <name type="ordered locus">MGAS10750_Spy1873</name>
</gene>
<proteinExistence type="inferred from homology"/>
<accession>Q1J4B3</accession>
<organism>
    <name type="scientific">Streptococcus pyogenes serotype M4 (strain MGAS10750)</name>
    <dbReference type="NCBI Taxonomy" id="370554"/>
    <lineage>
        <taxon>Bacteria</taxon>
        <taxon>Bacillati</taxon>
        <taxon>Bacillota</taxon>
        <taxon>Bacilli</taxon>
        <taxon>Lactobacillales</taxon>
        <taxon>Streptococcaceae</taxon>
        <taxon>Streptococcus</taxon>
    </lineage>
</organism>
<reference key="1">
    <citation type="journal article" date="2006" name="Proc. Natl. Acad. Sci. U.S.A.">
        <title>Molecular genetic anatomy of inter- and intraserotype variation in the human bacterial pathogen group A Streptococcus.</title>
        <authorList>
            <person name="Beres S.B."/>
            <person name="Richter E.W."/>
            <person name="Nagiec M.J."/>
            <person name="Sumby P."/>
            <person name="Porcella S.F."/>
            <person name="DeLeo F.R."/>
            <person name="Musser J.M."/>
        </authorList>
    </citation>
    <scope>NUCLEOTIDE SEQUENCE [LARGE SCALE GENOMIC DNA]</scope>
    <source>
        <strain>MGAS10750</strain>
    </source>
</reference>
<name>EFTS_STRPF</name>
<comment type="function">
    <text evidence="1">Associates with the EF-Tu.GDP complex and induces the exchange of GDP to GTP. It remains bound to the aminoacyl-tRNA.EF-Tu.GTP complex up to the GTP hydrolysis stage on the ribosome.</text>
</comment>
<comment type="subcellular location">
    <subcellularLocation>
        <location evidence="1">Cytoplasm</location>
    </subcellularLocation>
</comment>
<comment type="similarity">
    <text evidence="1">Belongs to the EF-Ts family.</text>
</comment>
<comment type="sequence caution" evidence="2">
    <conflict type="erroneous initiation">
        <sequence resource="EMBL-CDS" id="ABF38823"/>
    </conflict>
</comment>
<feature type="chain" id="PRO_0000323470" description="Elongation factor Ts">
    <location>
        <begin position="1"/>
        <end position="346"/>
    </location>
</feature>
<feature type="region of interest" description="Involved in Mg(2+) ion dislocation from EF-Tu" evidence="1">
    <location>
        <begin position="80"/>
        <end position="83"/>
    </location>
</feature>
<protein>
    <recommendedName>
        <fullName evidence="1">Elongation factor Ts</fullName>
        <shortName evidence="1">EF-Ts</shortName>
    </recommendedName>
</protein>
<sequence length="346" mass="37257">MAEITAKLVKELREKSGAGVMDAKKALVETDGDMDKAVELLREKGMAKAAKKADRVAAEGLTGVYVHGNVAAVVEVNAETDFVAKNAQFVELVNATAKVIAEGKPANNDEALALVMPSGETLAEAYVNATATIGEKISFRRFALIEKTDEQHFGAYQHNGGRIGVISVVEGGDDALAKQVSMHIAAMKPTVLSYTELDAQFIKDELAQLNHAIELDNESRAMVDKPALPFLKYGSKAQLSDDVITAAEADIKAELAAEGKPEKIWDKIIPGKMDRFMLDNTKVDQAYTLLAQVYIMDDSKTVEAYLDSVNAKAIAFARFEVGEGIEKKANDFESEVAATMAAALNN</sequence>